<gene>
    <name evidence="1" type="primary">alaS</name>
    <name type="ordered locus">Minf_0650</name>
</gene>
<proteinExistence type="inferred from homology"/>
<accession>B3E044</accession>
<evidence type="ECO:0000255" key="1">
    <source>
        <dbReference type="HAMAP-Rule" id="MF_00036"/>
    </source>
</evidence>
<protein>
    <recommendedName>
        <fullName evidence="1">Alanine--tRNA ligase</fullName>
        <ecNumber evidence="1">6.1.1.7</ecNumber>
    </recommendedName>
    <alternativeName>
        <fullName evidence="1">Alanyl-tRNA synthetase</fullName>
        <shortName evidence="1">AlaRS</shortName>
    </alternativeName>
</protein>
<comment type="function">
    <text evidence="1">Catalyzes the attachment of alanine to tRNA(Ala) in a two-step reaction: alanine is first activated by ATP to form Ala-AMP and then transferred to the acceptor end of tRNA(Ala). Also edits incorrectly charged Ser-tRNA(Ala) and Gly-tRNA(Ala) via its editing domain.</text>
</comment>
<comment type="catalytic activity">
    <reaction evidence="1">
        <text>tRNA(Ala) + L-alanine + ATP = L-alanyl-tRNA(Ala) + AMP + diphosphate</text>
        <dbReference type="Rhea" id="RHEA:12540"/>
        <dbReference type="Rhea" id="RHEA-COMP:9657"/>
        <dbReference type="Rhea" id="RHEA-COMP:9923"/>
        <dbReference type="ChEBI" id="CHEBI:30616"/>
        <dbReference type="ChEBI" id="CHEBI:33019"/>
        <dbReference type="ChEBI" id="CHEBI:57972"/>
        <dbReference type="ChEBI" id="CHEBI:78442"/>
        <dbReference type="ChEBI" id="CHEBI:78497"/>
        <dbReference type="ChEBI" id="CHEBI:456215"/>
        <dbReference type="EC" id="6.1.1.7"/>
    </reaction>
</comment>
<comment type="cofactor">
    <cofactor evidence="1">
        <name>Zn(2+)</name>
        <dbReference type="ChEBI" id="CHEBI:29105"/>
    </cofactor>
    <text evidence="1">Binds 1 zinc ion per subunit.</text>
</comment>
<comment type="subcellular location">
    <subcellularLocation>
        <location evidence="1">Cytoplasm</location>
    </subcellularLocation>
</comment>
<comment type="domain">
    <text evidence="1">Consists of three domains; the N-terminal catalytic domain, the editing domain and the C-terminal C-Ala domain. The editing domain removes incorrectly charged amino acids, while the C-Ala domain, along with tRNA(Ala), serves as a bridge to cooperatively bring together the editing and aminoacylation centers thus stimulating deacylation of misacylated tRNAs.</text>
</comment>
<comment type="similarity">
    <text evidence="1">Belongs to the class-II aminoacyl-tRNA synthetase family.</text>
</comment>
<sequence>MMNSNEIRQSFLDFFKERGHTILPSASLVPESPNLLFTNAGMNPFVPFFLGKQKCPYVPPRIADSQKCLRAGGKHNDLEEVGYDTYHHTFFEMLGNWSFNDYFKEEAIHWAWELLTQKWGFPKERIYATVYKPAPDEPGEFDEEAFRIWFKLFQKAKLNPLLHIHFGTKKDNFWMMGETGPCGPCSEIHIDLTPDGQSEGKLINKNSPLCIEIWNLVFIQLNANEDGSFSLLPSRHVDTGMGLERVCAIIQGTSSFRQFNRTISDYDTDLFIPLIEKLQDISKVSYTGSIPPTPDFALDPQLKKDIAFRVIVDHVRALAFAIADGILPSNLGRGHVLRRLLRRAIRFGQILGVNPPFLFEMVDPLVKIMGSHYPELIDKQGHIEEVISSEEELFARTLSHGLALFEEIKQKMIAEKRKEISGKEAFVLYDTYGFPLDLTQLLAKEQGFSVDTQGFERLMAEQRRRSLLSHEEDIVSLTKTSQFVGYEELEAEAEVVVLLSANRAIFDRTPFYAEMGGQVGDKGYVVFDQKKIEVLDTMKSASGAHVHRLAFTDDLKPGSRVYLQVDEKRRRCIAAHHTATHLLHWALRKVLGPETLQRGSYVGPDRLRFDFSHTGPLSAEELAEIERLVNEKIELNDPVTAEEESYEKVKNNPDILQLFGEKYGQRVRIVSVGRYSKELCGGTHVRSTGEIGYFKILGEYGVSAGIRRIEAACGKALEQFLHAQAAEQDKKWQILHSKDPSLPRLSKWVDTLDLDSLIEIFQRRNEELSSFEKEIKEREKLRAKKQEENFRREASQQAMAAIAQVEKIGAIPVLFLDCDAKPQSYLPLLWNEISKRIDSVAILASRSEGKINLFIGVGPSLTTKIEARNLLSQLVASFEGKGGGSKTIAQGGLKDSIEISSLFEKGRGILEQYGGQKGQTEPKATG</sequence>
<dbReference type="EC" id="6.1.1.7" evidence="1"/>
<dbReference type="EMBL" id="CP000975">
    <property type="protein sequence ID" value="ACD82705.1"/>
    <property type="molecule type" value="Genomic_DNA"/>
</dbReference>
<dbReference type="SMR" id="B3E044"/>
<dbReference type="STRING" id="481448.Minf_0650"/>
<dbReference type="KEGG" id="min:Minf_0650"/>
<dbReference type="eggNOG" id="COG0013">
    <property type="taxonomic scope" value="Bacteria"/>
</dbReference>
<dbReference type="HOGENOM" id="CLU_004485_1_1_0"/>
<dbReference type="OrthoDB" id="9803884at2"/>
<dbReference type="Proteomes" id="UP000009149">
    <property type="component" value="Chromosome"/>
</dbReference>
<dbReference type="GO" id="GO:0005829">
    <property type="term" value="C:cytosol"/>
    <property type="evidence" value="ECO:0007669"/>
    <property type="project" value="TreeGrafter"/>
</dbReference>
<dbReference type="GO" id="GO:0004813">
    <property type="term" value="F:alanine-tRNA ligase activity"/>
    <property type="evidence" value="ECO:0007669"/>
    <property type="project" value="UniProtKB-UniRule"/>
</dbReference>
<dbReference type="GO" id="GO:0002161">
    <property type="term" value="F:aminoacyl-tRNA deacylase activity"/>
    <property type="evidence" value="ECO:0007669"/>
    <property type="project" value="TreeGrafter"/>
</dbReference>
<dbReference type="GO" id="GO:0005524">
    <property type="term" value="F:ATP binding"/>
    <property type="evidence" value="ECO:0007669"/>
    <property type="project" value="UniProtKB-UniRule"/>
</dbReference>
<dbReference type="GO" id="GO:0000049">
    <property type="term" value="F:tRNA binding"/>
    <property type="evidence" value="ECO:0007669"/>
    <property type="project" value="UniProtKB-KW"/>
</dbReference>
<dbReference type="GO" id="GO:0008270">
    <property type="term" value="F:zinc ion binding"/>
    <property type="evidence" value="ECO:0007669"/>
    <property type="project" value="UniProtKB-UniRule"/>
</dbReference>
<dbReference type="GO" id="GO:0006419">
    <property type="term" value="P:alanyl-tRNA aminoacylation"/>
    <property type="evidence" value="ECO:0007669"/>
    <property type="project" value="UniProtKB-UniRule"/>
</dbReference>
<dbReference type="CDD" id="cd00673">
    <property type="entry name" value="AlaRS_core"/>
    <property type="match status" value="1"/>
</dbReference>
<dbReference type="FunFam" id="3.10.310.40:FF:000001">
    <property type="entry name" value="Alanine--tRNA ligase"/>
    <property type="match status" value="1"/>
</dbReference>
<dbReference type="FunFam" id="3.30.930.10:FF:000011">
    <property type="entry name" value="Alanine--tRNA ligase, cytoplasmic"/>
    <property type="match status" value="1"/>
</dbReference>
<dbReference type="FunFam" id="3.30.980.10:FF:000004">
    <property type="entry name" value="Alanine--tRNA ligase, cytoplasmic"/>
    <property type="match status" value="1"/>
</dbReference>
<dbReference type="Gene3D" id="2.40.30.130">
    <property type="match status" value="1"/>
</dbReference>
<dbReference type="Gene3D" id="3.10.310.40">
    <property type="match status" value="1"/>
</dbReference>
<dbReference type="Gene3D" id="3.30.54.20">
    <property type="match status" value="1"/>
</dbReference>
<dbReference type="Gene3D" id="3.30.930.10">
    <property type="entry name" value="Bira Bifunctional Protein, Domain 2"/>
    <property type="match status" value="1"/>
</dbReference>
<dbReference type="Gene3D" id="3.30.980.10">
    <property type="entry name" value="Threonyl-trna Synthetase, Chain A, domain 2"/>
    <property type="match status" value="1"/>
</dbReference>
<dbReference type="HAMAP" id="MF_00036_B">
    <property type="entry name" value="Ala_tRNA_synth_B"/>
    <property type="match status" value="1"/>
</dbReference>
<dbReference type="InterPro" id="IPR045864">
    <property type="entry name" value="aa-tRNA-synth_II/BPL/LPL"/>
</dbReference>
<dbReference type="InterPro" id="IPR002318">
    <property type="entry name" value="Ala-tRNA-lgiase_IIc"/>
</dbReference>
<dbReference type="InterPro" id="IPR018162">
    <property type="entry name" value="Ala-tRNA-ligase_IIc_anticod-bd"/>
</dbReference>
<dbReference type="InterPro" id="IPR018165">
    <property type="entry name" value="Ala-tRNA-synth_IIc_core"/>
</dbReference>
<dbReference type="InterPro" id="IPR018164">
    <property type="entry name" value="Ala-tRNA-synth_IIc_N"/>
</dbReference>
<dbReference type="InterPro" id="IPR050058">
    <property type="entry name" value="Ala-tRNA_ligase"/>
</dbReference>
<dbReference type="InterPro" id="IPR023033">
    <property type="entry name" value="Ala_tRNA_ligase_euk/bac"/>
</dbReference>
<dbReference type="InterPro" id="IPR018163">
    <property type="entry name" value="Thr/Ala-tRNA-synth_IIc_edit"/>
</dbReference>
<dbReference type="InterPro" id="IPR009000">
    <property type="entry name" value="Transl_B-barrel_sf"/>
</dbReference>
<dbReference type="InterPro" id="IPR012947">
    <property type="entry name" value="tRNA_SAD"/>
</dbReference>
<dbReference type="NCBIfam" id="TIGR00344">
    <property type="entry name" value="alaS"/>
    <property type="match status" value="1"/>
</dbReference>
<dbReference type="PANTHER" id="PTHR11777:SF9">
    <property type="entry name" value="ALANINE--TRNA LIGASE, CYTOPLASMIC"/>
    <property type="match status" value="1"/>
</dbReference>
<dbReference type="PANTHER" id="PTHR11777">
    <property type="entry name" value="ALANYL-TRNA SYNTHETASE"/>
    <property type="match status" value="1"/>
</dbReference>
<dbReference type="Pfam" id="PF01411">
    <property type="entry name" value="tRNA-synt_2c"/>
    <property type="match status" value="1"/>
</dbReference>
<dbReference type="Pfam" id="PF07973">
    <property type="entry name" value="tRNA_SAD"/>
    <property type="match status" value="1"/>
</dbReference>
<dbReference type="PRINTS" id="PR00980">
    <property type="entry name" value="TRNASYNTHALA"/>
</dbReference>
<dbReference type="SMART" id="SM00863">
    <property type="entry name" value="tRNA_SAD"/>
    <property type="match status" value="1"/>
</dbReference>
<dbReference type="SUPFAM" id="SSF55681">
    <property type="entry name" value="Class II aaRS and biotin synthetases"/>
    <property type="match status" value="1"/>
</dbReference>
<dbReference type="SUPFAM" id="SSF101353">
    <property type="entry name" value="Putative anticodon-binding domain of alanyl-tRNA synthetase (AlaRS)"/>
    <property type="match status" value="1"/>
</dbReference>
<dbReference type="SUPFAM" id="SSF55186">
    <property type="entry name" value="ThrRS/AlaRS common domain"/>
    <property type="match status" value="1"/>
</dbReference>
<dbReference type="SUPFAM" id="SSF50447">
    <property type="entry name" value="Translation proteins"/>
    <property type="match status" value="1"/>
</dbReference>
<dbReference type="PROSITE" id="PS50860">
    <property type="entry name" value="AA_TRNA_LIGASE_II_ALA"/>
    <property type="match status" value="1"/>
</dbReference>
<reference key="1">
    <citation type="journal article" date="2008" name="Biol. Direct">
        <title>Complete genome sequence of the extremely acidophilic methanotroph isolate V4, Methylacidiphilum infernorum, a representative of the bacterial phylum Verrucomicrobia.</title>
        <authorList>
            <person name="Hou S."/>
            <person name="Makarova K.S."/>
            <person name="Saw J.H."/>
            <person name="Senin P."/>
            <person name="Ly B.V."/>
            <person name="Zhou Z."/>
            <person name="Ren Y."/>
            <person name="Wang J."/>
            <person name="Galperin M.Y."/>
            <person name="Omelchenko M.V."/>
            <person name="Wolf Y.I."/>
            <person name="Yutin N."/>
            <person name="Koonin E.V."/>
            <person name="Stott M.B."/>
            <person name="Mountain B.W."/>
            <person name="Crowe M.A."/>
            <person name="Smirnova A.V."/>
            <person name="Dunfield P.F."/>
            <person name="Feng L."/>
            <person name="Wang L."/>
            <person name="Alam M."/>
        </authorList>
    </citation>
    <scope>NUCLEOTIDE SEQUENCE [LARGE SCALE GENOMIC DNA]</scope>
    <source>
        <strain>Isolate V4</strain>
    </source>
</reference>
<organism>
    <name type="scientific">Methylacidiphilum infernorum (isolate V4)</name>
    <name type="common">Methylokorus infernorum (strain V4)</name>
    <dbReference type="NCBI Taxonomy" id="481448"/>
    <lineage>
        <taxon>Bacteria</taxon>
        <taxon>Pseudomonadati</taxon>
        <taxon>Verrucomicrobiota</taxon>
        <taxon>Methylacidiphilae</taxon>
        <taxon>Methylacidiphilales</taxon>
        <taxon>Methylacidiphilaceae</taxon>
        <taxon>Methylacidiphilum (ex Ratnadevi et al. 2023)</taxon>
    </lineage>
</organism>
<feature type="chain" id="PRO_0000347676" description="Alanine--tRNA ligase">
    <location>
        <begin position="1"/>
        <end position="926"/>
    </location>
</feature>
<feature type="binding site" evidence="1">
    <location>
        <position position="577"/>
    </location>
    <ligand>
        <name>Zn(2+)</name>
        <dbReference type="ChEBI" id="CHEBI:29105"/>
    </ligand>
</feature>
<feature type="binding site" evidence="1">
    <location>
        <position position="581"/>
    </location>
    <ligand>
        <name>Zn(2+)</name>
        <dbReference type="ChEBI" id="CHEBI:29105"/>
    </ligand>
</feature>
<feature type="binding site" evidence="1">
    <location>
        <position position="680"/>
    </location>
    <ligand>
        <name>Zn(2+)</name>
        <dbReference type="ChEBI" id="CHEBI:29105"/>
    </ligand>
</feature>
<feature type="binding site" evidence="1">
    <location>
        <position position="684"/>
    </location>
    <ligand>
        <name>Zn(2+)</name>
        <dbReference type="ChEBI" id="CHEBI:29105"/>
    </ligand>
</feature>
<keyword id="KW-0030">Aminoacyl-tRNA synthetase</keyword>
<keyword id="KW-0067">ATP-binding</keyword>
<keyword id="KW-0963">Cytoplasm</keyword>
<keyword id="KW-0436">Ligase</keyword>
<keyword id="KW-0479">Metal-binding</keyword>
<keyword id="KW-0547">Nucleotide-binding</keyword>
<keyword id="KW-0648">Protein biosynthesis</keyword>
<keyword id="KW-0694">RNA-binding</keyword>
<keyword id="KW-0820">tRNA-binding</keyword>
<keyword id="KW-0862">Zinc</keyword>
<name>SYA_METI4</name>